<dbReference type="EC" id="7.1.1.-" evidence="1"/>
<dbReference type="EMBL" id="CP000613">
    <property type="protein sequence ID" value="ACI98651.1"/>
    <property type="molecule type" value="Genomic_DNA"/>
</dbReference>
<dbReference type="RefSeq" id="WP_012566439.1">
    <property type="nucleotide sequence ID" value="NC_011420.2"/>
</dbReference>
<dbReference type="SMR" id="B6ISY0"/>
<dbReference type="STRING" id="414684.RC1_1239"/>
<dbReference type="KEGG" id="rce:RC1_1239"/>
<dbReference type="eggNOG" id="COG0377">
    <property type="taxonomic scope" value="Bacteria"/>
</dbReference>
<dbReference type="HOGENOM" id="CLU_055737_7_3_5"/>
<dbReference type="Proteomes" id="UP000001591">
    <property type="component" value="Chromosome"/>
</dbReference>
<dbReference type="GO" id="GO:0005886">
    <property type="term" value="C:plasma membrane"/>
    <property type="evidence" value="ECO:0007669"/>
    <property type="project" value="UniProtKB-SubCell"/>
</dbReference>
<dbReference type="GO" id="GO:0045271">
    <property type="term" value="C:respiratory chain complex I"/>
    <property type="evidence" value="ECO:0007669"/>
    <property type="project" value="TreeGrafter"/>
</dbReference>
<dbReference type="GO" id="GO:0051539">
    <property type="term" value="F:4 iron, 4 sulfur cluster binding"/>
    <property type="evidence" value="ECO:0007669"/>
    <property type="project" value="UniProtKB-KW"/>
</dbReference>
<dbReference type="GO" id="GO:0005506">
    <property type="term" value="F:iron ion binding"/>
    <property type="evidence" value="ECO:0007669"/>
    <property type="project" value="UniProtKB-UniRule"/>
</dbReference>
<dbReference type="GO" id="GO:0008137">
    <property type="term" value="F:NADH dehydrogenase (ubiquinone) activity"/>
    <property type="evidence" value="ECO:0007669"/>
    <property type="project" value="InterPro"/>
</dbReference>
<dbReference type="GO" id="GO:0050136">
    <property type="term" value="F:NADH:ubiquinone reductase (non-electrogenic) activity"/>
    <property type="evidence" value="ECO:0007669"/>
    <property type="project" value="UniProtKB-UniRule"/>
</dbReference>
<dbReference type="GO" id="GO:0048038">
    <property type="term" value="F:quinone binding"/>
    <property type="evidence" value="ECO:0007669"/>
    <property type="project" value="UniProtKB-KW"/>
</dbReference>
<dbReference type="GO" id="GO:0009060">
    <property type="term" value="P:aerobic respiration"/>
    <property type="evidence" value="ECO:0007669"/>
    <property type="project" value="TreeGrafter"/>
</dbReference>
<dbReference type="GO" id="GO:0015990">
    <property type="term" value="P:electron transport coupled proton transport"/>
    <property type="evidence" value="ECO:0007669"/>
    <property type="project" value="TreeGrafter"/>
</dbReference>
<dbReference type="FunFam" id="3.40.50.12280:FF:000001">
    <property type="entry name" value="NADH-quinone oxidoreductase subunit B 2"/>
    <property type="match status" value="1"/>
</dbReference>
<dbReference type="Gene3D" id="3.40.50.12280">
    <property type="match status" value="1"/>
</dbReference>
<dbReference type="HAMAP" id="MF_01356">
    <property type="entry name" value="NDH1_NuoB"/>
    <property type="match status" value="1"/>
</dbReference>
<dbReference type="InterPro" id="IPR006137">
    <property type="entry name" value="NADH_UbQ_OxRdtase-like_20kDa"/>
</dbReference>
<dbReference type="InterPro" id="IPR006138">
    <property type="entry name" value="NADH_UQ_OxRdtase_20Kd_su"/>
</dbReference>
<dbReference type="NCBIfam" id="TIGR01957">
    <property type="entry name" value="nuoB_fam"/>
    <property type="match status" value="1"/>
</dbReference>
<dbReference type="NCBIfam" id="NF005012">
    <property type="entry name" value="PRK06411.1"/>
    <property type="match status" value="1"/>
</dbReference>
<dbReference type="PANTHER" id="PTHR11995">
    <property type="entry name" value="NADH DEHYDROGENASE"/>
    <property type="match status" value="1"/>
</dbReference>
<dbReference type="PANTHER" id="PTHR11995:SF14">
    <property type="entry name" value="NADH DEHYDROGENASE [UBIQUINONE] IRON-SULFUR PROTEIN 7, MITOCHONDRIAL"/>
    <property type="match status" value="1"/>
</dbReference>
<dbReference type="Pfam" id="PF01058">
    <property type="entry name" value="Oxidored_q6"/>
    <property type="match status" value="1"/>
</dbReference>
<dbReference type="SUPFAM" id="SSF56770">
    <property type="entry name" value="HydA/Nqo6-like"/>
    <property type="match status" value="1"/>
</dbReference>
<dbReference type="PROSITE" id="PS01150">
    <property type="entry name" value="COMPLEX1_20K"/>
    <property type="match status" value="1"/>
</dbReference>
<sequence>MGVIATPPPSVQGPSSQVPSSAPIPPGPVQDAYLQAVQQEMQDKGYLVARFDALMDWARTGSLWPMTFGLACCAVEMIHAYMARYDLDRFGVIPRPSPRQSDVMIVAGTVCNKMAPALRKVYDQMAEPRWVISMGSCANGGGYYHYSYSVVRGVDRIVPVDIYVPGCPPTAEALVYGVLQLQKKIKNGNRLIRT</sequence>
<gene>
    <name evidence="1" type="primary">nuoB</name>
    <name type="ordered locus">RC1_1239</name>
</gene>
<organism>
    <name type="scientific">Rhodospirillum centenum (strain ATCC 51521 / SW)</name>
    <dbReference type="NCBI Taxonomy" id="414684"/>
    <lineage>
        <taxon>Bacteria</taxon>
        <taxon>Pseudomonadati</taxon>
        <taxon>Pseudomonadota</taxon>
        <taxon>Alphaproteobacteria</taxon>
        <taxon>Rhodospirillales</taxon>
        <taxon>Rhodospirillaceae</taxon>
        <taxon>Rhodospirillum</taxon>
    </lineage>
</organism>
<evidence type="ECO:0000255" key="1">
    <source>
        <dbReference type="HAMAP-Rule" id="MF_01356"/>
    </source>
</evidence>
<evidence type="ECO:0000256" key="2">
    <source>
        <dbReference type="SAM" id="MobiDB-lite"/>
    </source>
</evidence>
<protein>
    <recommendedName>
        <fullName evidence="1">NADH-quinone oxidoreductase subunit B</fullName>
        <ecNumber evidence="1">7.1.1.-</ecNumber>
    </recommendedName>
    <alternativeName>
        <fullName evidence="1">NADH dehydrogenase I subunit B</fullName>
    </alternativeName>
    <alternativeName>
        <fullName evidence="1">NDH-1 subunit B</fullName>
    </alternativeName>
</protein>
<comment type="function">
    <text evidence="1">NDH-1 shuttles electrons from NADH, via FMN and iron-sulfur (Fe-S) centers, to quinones in the respiratory chain. The immediate electron acceptor for the enzyme in this species is believed to be ubiquinone. Couples the redox reaction to proton translocation (for every two electrons transferred, four hydrogen ions are translocated across the cytoplasmic membrane), and thus conserves the redox energy in a proton gradient.</text>
</comment>
<comment type="catalytic activity">
    <reaction evidence="1">
        <text>a quinone + NADH + 5 H(+)(in) = a quinol + NAD(+) + 4 H(+)(out)</text>
        <dbReference type="Rhea" id="RHEA:57888"/>
        <dbReference type="ChEBI" id="CHEBI:15378"/>
        <dbReference type="ChEBI" id="CHEBI:24646"/>
        <dbReference type="ChEBI" id="CHEBI:57540"/>
        <dbReference type="ChEBI" id="CHEBI:57945"/>
        <dbReference type="ChEBI" id="CHEBI:132124"/>
    </reaction>
</comment>
<comment type="cofactor">
    <cofactor evidence="1">
        <name>[4Fe-4S] cluster</name>
        <dbReference type="ChEBI" id="CHEBI:49883"/>
    </cofactor>
    <text evidence="1">Binds 1 [4Fe-4S] cluster.</text>
</comment>
<comment type="subunit">
    <text evidence="1">NDH-1 is composed of 14 different subunits. Subunits NuoB, C, D, E, F, and G constitute the peripheral sector of the complex.</text>
</comment>
<comment type="subcellular location">
    <subcellularLocation>
        <location evidence="1">Cell inner membrane</location>
        <topology evidence="1">Peripheral membrane protein</topology>
        <orientation evidence="1">Cytoplasmic side</orientation>
    </subcellularLocation>
</comment>
<comment type="similarity">
    <text evidence="1">Belongs to the complex I 20 kDa subunit family.</text>
</comment>
<feature type="chain" id="PRO_0000376347" description="NADH-quinone oxidoreductase subunit B">
    <location>
        <begin position="1"/>
        <end position="194"/>
    </location>
</feature>
<feature type="region of interest" description="Disordered" evidence="2">
    <location>
        <begin position="1"/>
        <end position="24"/>
    </location>
</feature>
<feature type="compositionally biased region" description="Pro residues" evidence="2">
    <location>
        <begin position="1"/>
        <end position="11"/>
    </location>
</feature>
<feature type="compositionally biased region" description="Low complexity" evidence="2">
    <location>
        <begin position="12"/>
        <end position="21"/>
    </location>
</feature>
<feature type="binding site" evidence="1">
    <location>
        <position position="72"/>
    </location>
    <ligand>
        <name>[4Fe-4S] cluster</name>
        <dbReference type="ChEBI" id="CHEBI:49883"/>
    </ligand>
</feature>
<feature type="binding site" evidence="1">
    <location>
        <position position="73"/>
    </location>
    <ligand>
        <name>[4Fe-4S] cluster</name>
        <dbReference type="ChEBI" id="CHEBI:49883"/>
    </ligand>
</feature>
<feature type="binding site" evidence="1">
    <location>
        <position position="137"/>
    </location>
    <ligand>
        <name>[4Fe-4S] cluster</name>
        <dbReference type="ChEBI" id="CHEBI:49883"/>
    </ligand>
</feature>
<feature type="binding site" evidence="1">
    <location>
        <position position="167"/>
    </location>
    <ligand>
        <name>[4Fe-4S] cluster</name>
        <dbReference type="ChEBI" id="CHEBI:49883"/>
    </ligand>
</feature>
<proteinExistence type="inferred from homology"/>
<name>NUOB_RHOCS</name>
<reference key="1">
    <citation type="submission" date="2007-03" db="EMBL/GenBank/DDBJ databases">
        <title>Genome sequence of Rhodospirillum centenum.</title>
        <authorList>
            <person name="Touchman J.W."/>
            <person name="Bauer C."/>
            <person name="Blankenship R.E."/>
        </authorList>
    </citation>
    <scope>NUCLEOTIDE SEQUENCE [LARGE SCALE GENOMIC DNA]</scope>
    <source>
        <strain>ATCC 51521 / SW</strain>
    </source>
</reference>
<keyword id="KW-0004">4Fe-4S</keyword>
<keyword id="KW-0997">Cell inner membrane</keyword>
<keyword id="KW-1003">Cell membrane</keyword>
<keyword id="KW-0408">Iron</keyword>
<keyword id="KW-0411">Iron-sulfur</keyword>
<keyword id="KW-0472">Membrane</keyword>
<keyword id="KW-0479">Metal-binding</keyword>
<keyword id="KW-0520">NAD</keyword>
<keyword id="KW-0874">Quinone</keyword>
<keyword id="KW-1185">Reference proteome</keyword>
<keyword id="KW-1278">Translocase</keyword>
<keyword id="KW-0813">Transport</keyword>
<keyword id="KW-0830">Ubiquinone</keyword>
<accession>B6ISY0</accession>